<comment type="function">
    <text evidence="1">Catalyzes the attachment of serine to tRNA(Ser). Is also able to aminoacylate tRNA(Sec) with serine, to form the misacylated tRNA L-seryl-tRNA(Sec), which will be further converted into selenocysteinyl-tRNA(Sec).</text>
</comment>
<comment type="catalytic activity">
    <reaction evidence="1">
        <text>tRNA(Ser) + L-serine + ATP = L-seryl-tRNA(Ser) + AMP + diphosphate + H(+)</text>
        <dbReference type="Rhea" id="RHEA:12292"/>
        <dbReference type="Rhea" id="RHEA-COMP:9669"/>
        <dbReference type="Rhea" id="RHEA-COMP:9703"/>
        <dbReference type="ChEBI" id="CHEBI:15378"/>
        <dbReference type="ChEBI" id="CHEBI:30616"/>
        <dbReference type="ChEBI" id="CHEBI:33019"/>
        <dbReference type="ChEBI" id="CHEBI:33384"/>
        <dbReference type="ChEBI" id="CHEBI:78442"/>
        <dbReference type="ChEBI" id="CHEBI:78533"/>
        <dbReference type="ChEBI" id="CHEBI:456215"/>
        <dbReference type="EC" id="6.1.1.11"/>
    </reaction>
</comment>
<comment type="catalytic activity">
    <reaction evidence="1">
        <text>tRNA(Sec) + L-serine + ATP = L-seryl-tRNA(Sec) + AMP + diphosphate + H(+)</text>
        <dbReference type="Rhea" id="RHEA:42580"/>
        <dbReference type="Rhea" id="RHEA-COMP:9742"/>
        <dbReference type="Rhea" id="RHEA-COMP:10128"/>
        <dbReference type="ChEBI" id="CHEBI:15378"/>
        <dbReference type="ChEBI" id="CHEBI:30616"/>
        <dbReference type="ChEBI" id="CHEBI:33019"/>
        <dbReference type="ChEBI" id="CHEBI:33384"/>
        <dbReference type="ChEBI" id="CHEBI:78442"/>
        <dbReference type="ChEBI" id="CHEBI:78533"/>
        <dbReference type="ChEBI" id="CHEBI:456215"/>
        <dbReference type="EC" id="6.1.1.11"/>
    </reaction>
</comment>
<comment type="pathway">
    <text evidence="1">Aminoacyl-tRNA biosynthesis; selenocysteinyl-tRNA(Sec) biosynthesis; L-seryl-tRNA(Sec) from L-serine and tRNA(Sec): step 1/1.</text>
</comment>
<comment type="subunit">
    <text evidence="1">Homodimer. The tRNA molecule binds across the dimer.</text>
</comment>
<comment type="subcellular location">
    <subcellularLocation>
        <location evidence="1">Cytoplasm</location>
    </subcellularLocation>
</comment>
<comment type="domain">
    <text evidence="1">Consists of two distinct domains, a catalytic core and a N-terminal extension that is involved in tRNA binding.</text>
</comment>
<comment type="similarity">
    <text evidence="1">Belongs to the class-II aminoacyl-tRNA synthetase family. Type-1 seryl-tRNA synthetase subfamily.</text>
</comment>
<gene>
    <name evidence="1" type="primary">serS</name>
    <name type="ordered locus">SDY_2368</name>
</gene>
<evidence type="ECO:0000255" key="1">
    <source>
        <dbReference type="HAMAP-Rule" id="MF_00176"/>
    </source>
</evidence>
<organism>
    <name type="scientific">Shigella dysenteriae serotype 1 (strain Sd197)</name>
    <dbReference type="NCBI Taxonomy" id="300267"/>
    <lineage>
        <taxon>Bacteria</taxon>
        <taxon>Pseudomonadati</taxon>
        <taxon>Pseudomonadota</taxon>
        <taxon>Gammaproteobacteria</taxon>
        <taxon>Enterobacterales</taxon>
        <taxon>Enterobacteriaceae</taxon>
        <taxon>Shigella</taxon>
    </lineage>
</organism>
<sequence>MLDPNLLRNEPDAVAEKLARRGFKLDVDKLGALEERRKVLQVKTENLQAERNSRSKSIGQAKARGEDIEPLRLEVNKLGEELDAAKAELDALQAEIRDIALTIPNLPADEVPVGKDENDNVEVSCWGTPREFDFEVRDHVTLGEMHSGLDFAAAVKLTGSRFVVMKGQIARMHRALSQFMLDLHTEQHGYSENYVPYLVNQDTLYGTGQLPKFAGDLFHTRPLEEEADTSNYALIPTAEVPLTNLVRGEIIDEDDLPIKMTAHTPCFRSEAGSYGRDTRGLIRMHQFDKVEMVQIVRPEDSMAALEEMTGHAEKVLQLLGLPYRKIILCTGDMGFGACKTYDLEVWIPAQNTYREISSCSNVWDFQARRMQARCRSKSDKKTRLVHTLNGSGLAVGRTLVAVMENYQQADGRIEVPEVLRPYMNGLEYIG</sequence>
<reference key="1">
    <citation type="journal article" date="2005" name="Nucleic Acids Res.">
        <title>Genome dynamics and diversity of Shigella species, the etiologic agents of bacillary dysentery.</title>
        <authorList>
            <person name="Yang F."/>
            <person name="Yang J."/>
            <person name="Zhang X."/>
            <person name="Chen L."/>
            <person name="Jiang Y."/>
            <person name="Yan Y."/>
            <person name="Tang X."/>
            <person name="Wang J."/>
            <person name="Xiong Z."/>
            <person name="Dong J."/>
            <person name="Xue Y."/>
            <person name="Zhu Y."/>
            <person name="Xu X."/>
            <person name="Sun L."/>
            <person name="Chen S."/>
            <person name="Nie H."/>
            <person name="Peng J."/>
            <person name="Xu J."/>
            <person name="Wang Y."/>
            <person name="Yuan Z."/>
            <person name="Wen Y."/>
            <person name="Yao Z."/>
            <person name="Shen Y."/>
            <person name="Qiang B."/>
            <person name="Hou Y."/>
            <person name="Yu J."/>
            <person name="Jin Q."/>
        </authorList>
    </citation>
    <scope>NUCLEOTIDE SEQUENCE [LARGE SCALE GENOMIC DNA]</scope>
    <source>
        <strain>Sd197</strain>
    </source>
</reference>
<dbReference type="EC" id="6.1.1.11" evidence="1"/>
<dbReference type="EMBL" id="CP000034">
    <property type="protein sequence ID" value="ABB62443.1"/>
    <property type="molecule type" value="Genomic_DNA"/>
</dbReference>
<dbReference type="RefSeq" id="WP_000886672.1">
    <property type="nucleotide sequence ID" value="NC_007606.1"/>
</dbReference>
<dbReference type="RefSeq" id="YP_403934.1">
    <property type="nucleotide sequence ID" value="NC_007606.1"/>
</dbReference>
<dbReference type="SMR" id="Q32E12"/>
<dbReference type="STRING" id="300267.SDY_2368"/>
<dbReference type="EnsemblBacteria" id="ABB62443">
    <property type="protein sequence ID" value="ABB62443"/>
    <property type="gene ID" value="SDY_2368"/>
</dbReference>
<dbReference type="KEGG" id="sdy:SDY_2368"/>
<dbReference type="PATRIC" id="fig|300267.13.peg.2861"/>
<dbReference type="HOGENOM" id="CLU_023797_1_1_6"/>
<dbReference type="UniPathway" id="UPA00906">
    <property type="reaction ID" value="UER00895"/>
</dbReference>
<dbReference type="Proteomes" id="UP000002716">
    <property type="component" value="Chromosome"/>
</dbReference>
<dbReference type="GO" id="GO:0005737">
    <property type="term" value="C:cytoplasm"/>
    <property type="evidence" value="ECO:0007669"/>
    <property type="project" value="UniProtKB-SubCell"/>
</dbReference>
<dbReference type="GO" id="GO:0005524">
    <property type="term" value="F:ATP binding"/>
    <property type="evidence" value="ECO:0007669"/>
    <property type="project" value="UniProtKB-UniRule"/>
</dbReference>
<dbReference type="GO" id="GO:0004828">
    <property type="term" value="F:serine-tRNA ligase activity"/>
    <property type="evidence" value="ECO:0007669"/>
    <property type="project" value="UniProtKB-UniRule"/>
</dbReference>
<dbReference type="GO" id="GO:0016260">
    <property type="term" value="P:selenocysteine biosynthetic process"/>
    <property type="evidence" value="ECO:0007669"/>
    <property type="project" value="UniProtKB-UniRule"/>
</dbReference>
<dbReference type="GO" id="GO:0006434">
    <property type="term" value="P:seryl-tRNA aminoacylation"/>
    <property type="evidence" value="ECO:0007669"/>
    <property type="project" value="UniProtKB-UniRule"/>
</dbReference>
<dbReference type="CDD" id="cd00770">
    <property type="entry name" value="SerRS_core"/>
    <property type="match status" value="1"/>
</dbReference>
<dbReference type="FunFam" id="1.10.287.40:FF:000001">
    <property type="entry name" value="Serine--tRNA ligase"/>
    <property type="match status" value="1"/>
</dbReference>
<dbReference type="FunFam" id="3.30.930.10:FF:000018">
    <property type="entry name" value="Serine--tRNA ligase"/>
    <property type="match status" value="1"/>
</dbReference>
<dbReference type="Gene3D" id="3.30.930.10">
    <property type="entry name" value="Bira Bifunctional Protein, Domain 2"/>
    <property type="match status" value="1"/>
</dbReference>
<dbReference type="Gene3D" id="1.10.287.40">
    <property type="entry name" value="Serine-tRNA synthetase, tRNA binding domain"/>
    <property type="match status" value="1"/>
</dbReference>
<dbReference type="HAMAP" id="MF_00176">
    <property type="entry name" value="Ser_tRNA_synth_type1"/>
    <property type="match status" value="1"/>
</dbReference>
<dbReference type="InterPro" id="IPR002314">
    <property type="entry name" value="aa-tRNA-synt_IIb"/>
</dbReference>
<dbReference type="InterPro" id="IPR006195">
    <property type="entry name" value="aa-tRNA-synth_II"/>
</dbReference>
<dbReference type="InterPro" id="IPR045864">
    <property type="entry name" value="aa-tRNA-synth_II/BPL/LPL"/>
</dbReference>
<dbReference type="InterPro" id="IPR002317">
    <property type="entry name" value="Ser-tRNA-ligase_type_1"/>
</dbReference>
<dbReference type="InterPro" id="IPR015866">
    <property type="entry name" value="Ser-tRNA-synth_1_N"/>
</dbReference>
<dbReference type="InterPro" id="IPR042103">
    <property type="entry name" value="SerRS_1_N_sf"/>
</dbReference>
<dbReference type="InterPro" id="IPR033729">
    <property type="entry name" value="SerRS_core"/>
</dbReference>
<dbReference type="InterPro" id="IPR010978">
    <property type="entry name" value="tRNA-bd_arm"/>
</dbReference>
<dbReference type="NCBIfam" id="TIGR00414">
    <property type="entry name" value="serS"/>
    <property type="match status" value="1"/>
</dbReference>
<dbReference type="PANTHER" id="PTHR43697:SF1">
    <property type="entry name" value="SERINE--TRNA LIGASE"/>
    <property type="match status" value="1"/>
</dbReference>
<dbReference type="PANTHER" id="PTHR43697">
    <property type="entry name" value="SERYL-TRNA SYNTHETASE"/>
    <property type="match status" value="1"/>
</dbReference>
<dbReference type="Pfam" id="PF02403">
    <property type="entry name" value="Seryl_tRNA_N"/>
    <property type="match status" value="1"/>
</dbReference>
<dbReference type="Pfam" id="PF00587">
    <property type="entry name" value="tRNA-synt_2b"/>
    <property type="match status" value="1"/>
</dbReference>
<dbReference type="PIRSF" id="PIRSF001529">
    <property type="entry name" value="Ser-tRNA-synth_IIa"/>
    <property type="match status" value="1"/>
</dbReference>
<dbReference type="PRINTS" id="PR00981">
    <property type="entry name" value="TRNASYNTHSER"/>
</dbReference>
<dbReference type="SUPFAM" id="SSF55681">
    <property type="entry name" value="Class II aaRS and biotin synthetases"/>
    <property type="match status" value="1"/>
</dbReference>
<dbReference type="SUPFAM" id="SSF46589">
    <property type="entry name" value="tRNA-binding arm"/>
    <property type="match status" value="1"/>
</dbReference>
<dbReference type="PROSITE" id="PS50862">
    <property type="entry name" value="AA_TRNA_LIGASE_II"/>
    <property type="match status" value="1"/>
</dbReference>
<keyword id="KW-0030">Aminoacyl-tRNA synthetase</keyword>
<keyword id="KW-0067">ATP-binding</keyword>
<keyword id="KW-0963">Cytoplasm</keyword>
<keyword id="KW-0436">Ligase</keyword>
<keyword id="KW-0547">Nucleotide-binding</keyword>
<keyword id="KW-0648">Protein biosynthesis</keyword>
<keyword id="KW-1185">Reference proteome</keyword>
<protein>
    <recommendedName>
        <fullName evidence="1">Serine--tRNA ligase</fullName>
        <ecNumber evidence="1">6.1.1.11</ecNumber>
    </recommendedName>
    <alternativeName>
        <fullName evidence="1">Seryl-tRNA synthetase</fullName>
        <shortName evidence="1">SerRS</shortName>
    </alternativeName>
    <alternativeName>
        <fullName evidence="1">Seryl-tRNA(Ser/Sec) synthetase</fullName>
    </alternativeName>
</protein>
<accession>Q32E12</accession>
<feature type="chain" id="PRO_1000019820" description="Serine--tRNA ligase">
    <location>
        <begin position="1"/>
        <end position="430"/>
    </location>
</feature>
<feature type="binding site" evidence="1">
    <location>
        <begin position="237"/>
        <end position="239"/>
    </location>
    <ligand>
        <name>L-serine</name>
        <dbReference type="ChEBI" id="CHEBI:33384"/>
    </ligand>
</feature>
<feature type="binding site" evidence="1">
    <location>
        <begin position="268"/>
        <end position="270"/>
    </location>
    <ligand>
        <name>ATP</name>
        <dbReference type="ChEBI" id="CHEBI:30616"/>
    </ligand>
</feature>
<feature type="binding site" evidence="1">
    <location>
        <position position="291"/>
    </location>
    <ligand>
        <name>L-serine</name>
        <dbReference type="ChEBI" id="CHEBI:33384"/>
    </ligand>
</feature>
<feature type="binding site" evidence="1">
    <location>
        <begin position="355"/>
        <end position="358"/>
    </location>
    <ligand>
        <name>ATP</name>
        <dbReference type="ChEBI" id="CHEBI:30616"/>
    </ligand>
</feature>
<feature type="binding site" evidence="1">
    <location>
        <position position="391"/>
    </location>
    <ligand>
        <name>L-serine</name>
        <dbReference type="ChEBI" id="CHEBI:33384"/>
    </ligand>
</feature>
<proteinExistence type="inferred from homology"/>
<name>SYS_SHIDS</name>